<comment type="function">
    <text evidence="1">Catalyzes the oxidation of erythronate-4-phosphate to 3-hydroxy-2-oxo-4-phosphonooxybutanoate.</text>
</comment>
<comment type="catalytic activity">
    <reaction evidence="1">
        <text>4-phospho-D-erythronate + NAD(+) = (R)-3-hydroxy-2-oxo-4-phosphooxybutanoate + NADH + H(+)</text>
        <dbReference type="Rhea" id="RHEA:18829"/>
        <dbReference type="ChEBI" id="CHEBI:15378"/>
        <dbReference type="ChEBI" id="CHEBI:57540"/>
        <dbReference type="ChEBI" id="CHEBI:57945"/>
        <dbReference type="ChEBI" id="CHEBI:58538"/>
        <dbReference type="ChEBI" id="CHEBI:58766"/>
        <dbReference type="EC" id="1.1.1.290"/>
    </reaction>
</comment>
<comment type="pathway">
    <text evidence="1">Cofactor biosynthesis; pyridoxine 5'-phosphate biosynthesis; pyridoxine 5'-phosphate from D-erythrose 4-phosphate: step 2/5.</text>
</comment>
<comment type="subunit">
    <text evidence="1">Homodimer.</text>
</comment>
<comment type="subcellular location">
    <subcellularLocation>
        <location evidence="1">Cytoplasm</location>
    </subcellularLocation>
</comment>
<comment type="similarity">
    <text evidence="1">Belongs to the D-isomer specific 2-hydroxyacid dehydrogenase family. PdxB subfamily.</text>
</comment>
<proteinExistence type="inferred from homology"/>
<accession>B7N5T2</accession>
<gene>
    <name evidence="1" type="primary">pdxB</name>
    <name type="ordered locus">ECUMN_2660</name>
</gene>
<protein>
    <recommendedName>
        <fullName evidence="1">Erythronate-4-phosphate dehydrogenase</fullName>
        <ecNumber evidence="1">1.1.1.290</ecNumber>
    </recommendedName>
</protein>
<dbReference type="EC" id="1.1.1.290" evidence="1"/>
<dbReference type="EMBL" id="CU928163">
    <property type="protein sequence ID" value="CAR13841.1"/>
    <property type="molecule type" value="Genomic_DNA"/>
</dbReference>
<dbReference type="RefSeq" id="WP_000699155.1">
    <property type="nucleotide sequence ID" value="NC_011751.1"/>
</dbReference>
<dbReference type="RefSeq" id="YP_002413369.1">
    <property type="nucleotide sequence ID" value="NC_011751.1"/>
</dbReference>
<dbReference type="SMR" id="B7N5T2"/>
<dbReference type="STRING" id="585056.ECUMN_2660"/>
<dbReference type="KEGG" id="eum:ECUMN_2660"/>
<dbReference type="PATRIC" id="fig|585056.7.peg.2843"/>
<dbReference type="HOGENOM" id="CLU_019796_4_0_6"/>
<dbReference type="UniPathway" id="UPA00244">
    <property type="reaction ID" value="UER00310"/>
</dbReference>
<dbReference type="Proteomes" id="UP000007097">
    <property type="component" value="Chromosome"/>
</dbReference>
<dbReference type="GO" id="GO:0005829">
    <property type="term" value="C:cytosol"/>
    <property type="evidence" value="ECO:0007669"/>
    <property type="project" value="UniProtKB-ARBA"/>
</dbReference>
<dbReference type="GO" id="GO:0033711">
    <property type="term" value="F:4-phosphoerythronate dehydrogenase activity"/>
    <property type="evidence" value="ECO:0007669"/>
    <property type="project" value="UniProtKB-EC"/>
</dbReference>
<dbReference type="GO" id="GO:0051287">
    <property type="term" value="F:NAD binding"/>
    <property type="evidence" value="ECO:0007669"/>
    <property type="project" value="InterPro"/>
</dbReference>
<dbReference type="GO" id="GO:0046983">
    <property type="term" value="F:protein dimerization activity"/>
    <property type="evidence" value="ECO:0007669"/>
    <property type="project" value="InterPro"/>
</dbReference>
<dbReference type="GO" id="GO:0036001">
    <property type="term" value="P:'de novo' pyridoxal 5'-phosphate biosynthetic process"/>
    <property type="evidence" value="ECO:0007669"/>
    <property type="project" value="TreeGrafter"/>
</dbReference>
<dbReference type="GO" id="GO:0008615">
    <property type="term" value="P:pyridoxine biosynthetic process"/>
    <property type="evidence" value="ECO:0007669"/>
    <property type="project" value="UniProtKB-UniRule"/>
</dbReference>
<dbReference type="CDD" id="cd12158">
    <property type="entry name" value="ErythrP_dh"/>
    <property type="match status" value="1"/>
</dbReference>
<dbReference type="FunFam" id="3.30.1370.170:FF:000001">
    <property type="entry name" value="Erythronate-4-phosphate dehydrogenase"/>
    <property type="match status" value="1"/>
</dbReference>
<dbReference type="FunFam" id="3.40.50.720:FF:000093">
    <property type="entry name" value="Erythronate-4-phosphate dehydrogenase"/>
    <property type="match status" value="1"/>
</dbReference>
<dbReference type="Gene3D" id="3.30.1370.170">
    <property type="match status" value="1"/>
</dbReference>
<dbReference type="Gene3D" id="3.40.50.720">
    <property type="entry name" value="NAD(P)-binding Rossmann-like Domain"/>
    <property type="match status" value="2"/>
</dbReference>
<dbReference type="HAMAP" id="MF_01825">
    <property type="entry name" value="PdxB"/>
    <property type="match status" value="1"/>
</dbReference>
<dbReference type="InterPro" id="IPR006139">
    <property type="entry name" value="D-isomer_2_OHA_DH_cat_dom"/>
</dbReference>
<dbReference type="InterPro" id="IPR029753">
    <property type="entry name" value="D-isomer_DH_CS"/>
</dbReference>
<dbReference type="InterPro" id="IPR029752">
    <property type="entry name" value="D-isomer_DH_CS1"/>
</dbReference>
<dbReference type="InterPro" id="IPR006140">
    <property type="entry name" value="D-isomer_DH_NAD-bd"/>
</dbReference>
<dbReference type="InterPro" id="IPR020921">
    <property type="entry name" value="Erythronate-4-P_DHase"/>
</dbReference>
<dbReference type="InterPro" id="IPR024531">
    <property type="entry name" value="Erythronate-4-P_DHase_dimer"/>
</dbReference>
<dbReference type="InterPro" id="IPR036291">
    <property type="entry name" value="NAD(P)-bd_dom_sf"/>
</dbReference>
<dbReference type="InterPro" id="IPR038251">
    <property type="entry name" value="PdxB_dimer_sf"/>
</dbReference>
<dbReference type="NCBIfam" id="NF001309">
    <property type="entry name" value="PRK00257.1"/>
    <property type="match status" value="1"/>
</dbReference>
<dbReference type="NCBIfam" id="NF011966">
    <property type="entry name" value="PRK15438.1"/>
    <property type="match status" value="1"/>
</dbReference>
<dbReference type="PANTHER" id="PTHR42938">
    <property type="entry name" value="FORMATE DEHYDROGENASE 1"/>
    <property type="match status" value="1"/>
</dbReference>
<dbReference type="PANTHER" id="PTHR42938:SF9">
    <property type="entry name" value="FORMATE DEHYDROGENASE 1"/>
    <property type="match status" value="1"/>
</dbReference>
<dbReference type="Pfam" id="PF00389">
    <property type="entry name" value="2-Hacid_dh"/>
    <property type="match status" value="1"/>
</dbReference>
<dbReference type="Pfam" id="PF02826">
    <property type="entry name" value="2-Hacid_dh_C"/>
    <property type="match status" value="1"/>
</dbReference>
<dbReference type="Pfam" id="PF11890">
    <property type="entry name" value="DUF3410"/>
    <property type="match status" value="1"/>
</dbReference>
<dbReference type="SUPFAM" id="SSF52283">
    <property type="entry name" value="Formate/glycerate dehydrogenase catalytic domain-like"/>
    <property type="match status" value="1"/>
</dbReference>
<dbReference type="SUPFAM" id="SSF51735">
    <property type="entry name" value="NAD(P)-binding Rossmann-fold domains"/>
    <property type="match status" value="1"/>
</dbReference>
<dbReference type="PROSITE" id="PS00065">
    <property type="entry name" value="D_2_HYDROXYACID_DH_1"/>
    <property type="match status" value="1"/>
</dbReference>
<dbReference type="PROSITE" id="PS00671">
    <property type="entry name" value="D_2_HYDROXYACID_DH_3"/>
    <property type="match status" value="1"/>
</dbReference>
<sequence length="378" mass="41292">MKILVDENMPYARDLFSRLGEVTAVPGRPIPVAQLADADALMVRSVTKVNESLLGGKPIKFVGTATAGTDHVDEAWLKQAGIGFSAAPGCNAIAVVEYVFSSLLMLAERDGFSLHDRTVGIVGVGNVGRRLQARLEALGITTLLCDPPRADRGDEGDFRSLDELVQHADILTFHTPLFKDGPYKTLHLADEKLIRSLKPGAILINACRGAVVDNTALLTCLNEGQKLSVVLDVWEGEPELNVELLKKVDIGTPHIAGYTLEGKARGTTQVFEAYSKFIGHEQHVALDTLLPAPEFGRITLHGPLDQPTLKRLVHLVYDVRRDDAPLRKVAGIPGEFDKLRKNYLERREWSSLYVICDDASAASLLCKLGFNAVHHPAR</sequence>
<evidence type="ECO:0000255" key="1">
    <source>
        <dbReference type="HAMAP-Rule" id="MF_01825"/>
    </source>
</evidence>
<feature type="chain" id="PRO_1000188266" description="Erythronate-4-phosphate dehydrogenase">
    <location>
        <begin position="1"/>
        <end position="378"/>
    </location>
</feature>
<feature type="active site" evidence="1">
    <location>
        <position position="208"/>
    </location>
</feature>
<feature type="active site" evidence="1">
    <location>
        <position position="237"/>
    </location>
</feature>
<feature type="active site" description="Proton donor" evidence="1">
    <location>
        <position position="254"/>
    </location>
</feature>
<feature type="binding site" evidence="1">
    <location>
        <position position="45"/>
    </location>
    <ligand>
        <name>substrate</name>
    </ligand>
</feature>
<feature type="binding site" evidence="1">
    <location>
        <position position="66"/>
    </location>
    <ligand>
        <name>substrate</name>
    </ligand>
</feature>
<feature type="binding site" evidence="1">
    <location>
        <position position="146"/>
    </location>
    <ligand>
        <name>NAD(+)</name>
        <dbReference type="ChEBI" id="CHEBI:57540"/>
    </ligand>
</feature>
<feature type="binding site" evidence="1">
    <location>
        <position position="175"/>
    </location>
    <ligand>
        <name>NAD(+)</name>
        <dbReference type="ChEBI" id="CHEBI:57540"/>
    </ligand>
</feature>
<feature type="binding site" evidence="1">
    <location>
        <position position="232"/>
    </location>
    <ligand>
        <name>NAD(+)</name>
        <dbReference type="ChEBI" id="CHEBI:57540"/>
    </ligand>
</feature>
<feature type="binding site" evidence="1">
    <location>
        <position position="257"/>
    </location>
    <ligand>
        <name>NAD(+)</name>
        <dbReference type="ChEBI" id="CHEBI:57540"/>
    </ligand>
</feature>
<feature type="binding site" evidence="1">
    <location>
        <position position="258"/>
    </location>
    <ligand>
        <name>substrate</name>
    </ligand>
</feature>
<organism>
    <name type="scientific">Escherichia coli O17:K52:H18 (strain UMN026 / ExPEC)</name>
    <dbReference type="NCBI Taxonomy" id="585056"/>
    <lineage>
        <taxon>Bacteria</taxon>
        <taxon>Pseudomonadati</taxon>
        <taxon>Pseudomonadota</taxon>
        <taxon>Gammaproteobacteria</taxon>
        <taxon>Enterobacterales</taxon>
        <taxon>Enterobacteriaceae</taxon>
        <taxon>Escherichia</taxon>
    </lineage>
</organism>
<keyword id="KW-0963">Cytoplasm</keyword>
<keyword id="KW-0520">NAD</keyword>
<keyword id="KW-0560">Oxidoreductase</keyword>
<keyword id="KW-0664">Pyridoxine biosynthesis</keyword>
<name>PDXB_ECOLU</name>
<reference key="1">
    <citation type="journal article" date="2009" name="PLoS Genet.">
        <title>Organised genome dynamics in the Escherichia coli species results in highly diverse adaptive paths.</title>
        <authorList>
            <person name="Touchon M."/>
            <person name="Hoede C."/>
            <person name="Tenaillon O."/>
            <person name="Barbe V."/>
            <person name="Baeriswyl S."/>
            <person name="Bidet P."/>
            <person name="Bingen E."/>
            <person name="Bonacorsi S."/>
            <person name="Bouchier C."/>
            <person name="Bouvet O."/>
            <person name="Calteau A."/>
            <person name="Chiapello H."/>
            <person name="Clermont O."/>
            <person name="Cruveiller S."/>
            <person name="Danchin A."/>
            <person name="Diard M."/>
            <person name="Dossat C."/>
            <person name="Karoui M.E."/>
            <person name="Frapy E."/>
            <person name="Garry L."/>
            <person name="Ghigo J.M."/>
            <person name="Gilles A.M."/>
            <person name="Johnson J."/>
            <person name="Le Bouguenec C."/>
            <person name="Lescat M."/>
            <person name="Mangenot S."/>
            <person name="Martinez-Jehanne V."/>
            <person name="Matic I."/>
            <person name="Nassif X."/>
            <person name="Oztas S."/>
            <person name="Petit M.A."/>
            <person name="Pichon C."/>
            <person name="Rouy Z."/>
            <person name="Ruf C.S."/>
            <person name="Schneider D."/>
            <person name="Tourret J."/>
            <person name="Vacherie B."/>
            <person name="Vallenet D."/>
            <person name="Medigue C."/>
            <person name="Rocha E.P.C."/>
            <person name="Denamur E."/>
        </authorList>
    </citation>
    <scope>NUCLEOTIDE SEQUENCE [LARGE SCALE GENOMIC DNA]</scope>
    <source>
        <strain>UMN026 / ExPEC</strain>
    </source>
</reference>